<gene>
    <name type="ORF">AO090012001025</name>
</gene>
<comment type="function">
    <text evidence="1">Secreted metalloproteinase that allows assimilation of proteinaceous substrates.</text>
</comment>
<comment type="subcellular location">
    <subcellularLocation>
        <location evidence="1">Secreted</location>
    </subcellularLocation>
</comment>
<comment type="similarity">
    <text evidence="3">Belongs to the peptidase M43B family.</text>
</comment>
<dbReference type="EC" id="3.4.24.-"/>
<dbReference type="EMBL" id="BA000052">
    <property type="protein sequence ID" value="BAE61115.1"/>
    <property type="molecule type" value="Genomic_DNA"/>
</dbReference>
<dbReference type="RefSeq" id="XP_001727954.1">
    <property type="nucleotide sequence ID" value="XM_001727902.3"/>
</dbReference>
<dbReference type="SMR" id="Q2UBF0"/>
<dbReference type="STRING" id="510516.Q2UBF0"/>
<dbReference type="MEROPS" id="M43.008"/>
<dbReference type="EnsemblFungi" id="BAE61115">
    <property type="protein sequence ID" value="BAE61115"/>
    <property type="gene ID" value="AO090012001025"/>
</dbReference>
<dbReference type="GeneID" id="5988428"/>
<dbReference type="KEGG" id="aor:AO090012001025"/>
<dbReference type="VEuPathDB" id="FungiDB:AO090012001025"/>
<dbReference type="HOGENOM" id="CLU_048726_0_2_1"/>
<dbReference type="OMA" id="DTWFHII"/>
<dbReference type="OrthoDB" id="14198at5052"/>
<dbReference type="Proteomes" id="UP000006564">
    <property type="component" value="Chromosome 4"/>
</dbReference>
<dbReference type="GO" id="GO:0005576">
    <property type="term" value="C:extracellular region"/>
    <property type="evidence" value="ECO:0007669"/>
    <property type="project" value="UniProtKB-SubCell"/>
</dbReference>
<dbReference type="GO" id="GO:0046872">
    <property type="term" value="F:metal ion binding"/>
    <property type="evidence" value="ECO:0007669"/>
    <property type="project" value="UniProtKB-KW"/>
</dbReference>
<dbReference type="GO" id="GO:0008237">
    <property type="term" value="F:metallopeptidase activity"/>
    <property type="evidence" value="ECO:0007669"/>
    <property type="project" value="UniProtKB-KW"/>
</dbReference>
<dbReference type="GO" id="GO:0006508">
    <property type="term" value="P:proteolysis"/>
    <property type="evidence" value="ECO:0007669"/>
    <property type="project" value="UniProtKB-KW"/>
</dbReference>
<dbReference type="CDD" id="cd04275">
    <property type="entry name" value="ZnMc_pappalysin_like"/>
    <property type="match status" value="1"/>
</dbReference>
<dbReference type="Gene3D" id="3.40.390.10">
    <property type="entry name" value="Collagenase (Catalytic Domain)"/>
    <property type="match status" value="1"/>
</dbReference>
<dbReference type="InterPro" id="IPR024079">
    <property type="entry name" value="MetalloPept_cat_dom_sf"/>
</dbReference>
<dbReference type="InterPro" id="IPR008754">
    <property type="entry name" value="Peptidase_M43"/>
</dbReference>
<dbReference type="PANTHER" id="PTHR47466">
    <property type="match status" value="1"/>
</dbReference>
<dbReference type="PANTHER" id="PTHR47466:SF1">
    <property type="entry name" value="METALLOPROTEASE MEP1 (AFU_ORTHOLOGUE AFUA_1G07730)-RELATED"/>
    <property type="match status" value="1"/>
</dbReference>
<dbReference type="Pfam" id="PF05572">
    <property type="entry name" value="Peptidase_M43"/>
    <property type="match status" value="1"/>
</dbReference>
<dbReference type="SUPFAM" id="SSF55486">
    <property type="entry name" value="Metalloproteases ('zincins'), catalytic domain"/>
    <property type="match status" value="1"/>
</dbReference>
<feature type="signal peptide" evidence="2">
    <location>
        <begin position="1"/>
        <end position="23"/>
    </location>
</feature>
<feature type="chain" id="PRO_0000407199" description="Extracellular metalloprotease AO090012001025">
    <location>
        <begin position="24"/>
        <end position="318"/>
    </location>
</feature>
<feature type="active site" evidence="1">
    <location>
        <position position="230"/>
    </location>
</feature>
<feature type="binding site" evidence="1">
    <location>
        <position position="229"/>
    </location>
    <ligand>
        <name>Zn(2+)</name>
        <dbReference type="ChEBI" id="CHEBI:29105"/>
        <note>catalytic</note>
    </ligand>
</feature>
<feature type="binding site" evidence="1">
    <location>
        <position position="233"/>
    </location>
    <ligand>
        <name>Zn(2+)</name>
        <dbReference type="ChEBI" id="CHEBI:29105"/>
        <note>catalytic</note>
    </ligand>
</feature>
<feature type="glycosylation site" description="N-linked (GlcNAc...) asparagine" evidence="2">
    <location>
        <position position="106"/>
    </location>
</feature>
<feature type="glycosylation site" description="N-linked (GlcNAc...) asparagine" evidence="2">
    <location>
        <position position="121"/>
    </location>
</feature>
<feature type="glycosylation site" description="N-linked (GlcNAc...) asparagine" evidence="2">
    <location>
        <position position="193"/>
    </location>
</feature>
<feature type="disulfide bond" evidence="1">
    <location>
        <begin position="268"/>
        <end position="295"/>
    </location>
</feature>
<protein>
    <recommendedName>
        <fullName>Extracellular metalloprotease AO090012001025</fullName>
        <ecNumber>3.4.24.-</ecNumber>
    </recommendedName>
</protein>
<reference key="1">
    <citation type="journal article" date="2005" name="Nature">
        <title>Genome sequencing and analysis of Aspergillus oryzae.</title>
        <authorList>
            <person name="Machida M."/>
            <person name="Asai K."/>
            <person name="Sano M."/>
            <person name="Tanaka T."/>
            <person name="Kumagai T."/>
            <person name="Terai G."/>
            <person name="Kusumoto K."/>
            <person name="Arima T."/>
            <person name="Akita O."/>
            <person name="Kashiwagi Y."/>
            <person name="Abe K."/>
            <person name="Gomi K."/>
            <person name="Horiuchi H."/>
            <person name="Kitamoto K."/>
            <person name="Kobayashi T."/>
            <person name="Takeuchi M."/>
            <person name="Denning D.W."/>
            <person name="Galagan J.E."/>
            <person name="Nierman W.C."/>
            <person name="Yu J."/>
            <person name="Archer D.B."/>
            <person name="Bennett J.W."/>
            <person name="Bhatnagar D."/>
            <person name="Cleveland T.E."/>
            <person name="Fedorova N.D."/>
            <person name="Gotoh O."/>
            <person name="Horikawa H."/>
            <person name="Hosoyama A."/>
            <person name="Ichinomiya M."/>
            <person name="Igarashi R."/>
            <person name="Iwashita K."/>
            <person name="Juvvadi P.R."/>
            <person name="Kato M."/>
            <person name="Kato Y."/>
            <person name="Kin T."/>
            <person name="Kokubun A."/>
            <person name="Maeda H."/>
            <person name="Maeyama N."/>
            <person name="Maruyama J."/>
            <person name="Nagasaki H."/>
            <person name="Nakajima T."/>
            <person name="Oda K."/>
            <person name="Okada K."/>
            <person name="Paulsen I."/>
            <person name="Sakamoto K."/>
            <person name="Sawano T."/>
            <person name="Takahashi M."/>
            <person name="Takase K."/>
            <person name="Terabayashi Y."/>
            <person name="Wortman J.R."/>
            <person name="Yamada O."/>
            <person name="Yamagata Y."/>
            <person name="Anazawa H."/>
            <person name="Hata Y."/>
            <person name="Koide Y."/>
            <person name="Komori T."/>
            <person name="Koyama Y."/>
            <person name="Minetoki T."/>
            <person name="Suharnan S."/>
            <person name="Tanaka A."/>
            <person name="Isono K."/>
            <person name="Kuhara S."/>
            <person name="Ogasawara N."/>
            <person name="Kikuchi H."/>
        </authorList>
    </citation>
    <scope>NUCLEOTIDE SEQUENCE [LARGE SCALE GENOMIC DNA]</scope>
    <source>
        <strain>ATCC 42149 / RIB 40</strain>
    </source>
</reference>
<name>MEP1_ASPOR</name>
<organism>
    <name type="scientific">Aspergillus oryzae (strain ATCC 42149 / RIB 40)</name>
    <name type="common">Yellow koji mold</name>
    <dbReference type="NCBI Taxonomy" id="510516"/>
    <lineage>
        <taxon>Eukaryota</taxon>
        <taxon>Fungi</taxon>
        <taxon>Dikarya</taxon>
        <taxon>Ascomycota</taxon>
        <taxon>Pezizomycotina</taxon>
        <taxon>Eurotiomycetes</taxon>
        <taxon>Eurotiomycetidae</taxon>
        <taxon>Eurotiales</taxon>
        <taxon>Aspergillaceae</taxon>
        <taxon>Aspergillus</taxon>
        <taxon>Aspergillus subgen. Circumdati</taxon>
    </lineage>
</organism>
<keyword id="KW-1015">Disulfide bond</keyword>
<keyword id="KW-0325">Glycoprotein</keyword>
<keyword id="KW-0378">Hydrolase</keyword>
<keyword id="KW-0479">Metal-binding</keyword>
<keyword id="KW-0482">Metalloprotease</keyword>
<keyword id="KW-0645">Protease</keyword>
<keyword id="KW-1185">Reference proteome</keyword>
<keyword id="KW-0964">Secreted</keyword>
<keyword id="KW-0732">Signal</keyword>
<keyword id="KW-0862">Zinc</keyword>
<proteinExistence type="inferred from homology"/>
<evidence type="ECO:0000250" key="1"/>
<evidence type="ECO:0000255" key="2"/>
<evidence type="ECO:0000305" key="3"/>
<accession>Q2UBF0</accession>
<sequence length="318" mass="35208">MSHFPTLHILILVIANLQIQCFAFVSQSRGFCATGPPTESLKAEYRRLSALGSQSYNPVDSESRAAITPIVIDTWFHIITGEAGTELISDEMIADQLSYLQNAYWNATISYRLQGVTRSANDTWARNEDEMAMKTVLRRGSYRTLNVYFHTDLQASPNAGARAFDIVRRELGVSQQQPTSMLGFCTLPDPSINASSPPSTYIKDGCNVLAETMPGGSLAHYNRGGTAIHEIGHWNGLLHTFEGESCSSDNEGDFIADTPQQSKPTEGCPAQKDSCPELPGFDAIHNFMDYSSDECYDSFTPDQVSRMRSMWFAMRDGK</sequence>